<protein>
    <recommendedName>
        <fullName evidence="1">HTH-type transcriptional activator RhaR</fullName>
    </recommendedName>
    <alternativeName>
        <fullName evidence="1">L-rhamnose operon transcriptional activator RhaR</fullName>
    </alternativeName>
</protein>
<feature type="chain" id="PRO_1000200942" description="HTH-type transcriptional activator RhaR">
    <location>
        <begin position="1"/>
        <end position="282"/>
    </location>
</feature>
<feature type="domain" description="HTH araC/xylS-type" evidence="1">
    <location>
        <begin position="179"/>
        <end position="277"/>
    </location>
</feature>
<feature type="DNA-binding region" description="H-T-H motif" evidence="1">
    <location>
        <begin position="196"/>
        <end position="217"/>
    </location>
</feature>
<feature type="DNA-binding region" description="H-T-H motif" evidence="1">
    <location>
        <begin position="244"/>
        <end position="267"/>
    </location>
</feature>
<feature type="site" description="Interaction with sigma-70" evidence="1">
    <location>
        <position position="246"/>
    </location>
</feature>
<evidence type="ECO:0000255" key="1">
    <source>
        <dbReference type="HAMAP-Rule" id="MF_01533"/>
    </source>
</evidence>
<reference key="1">
    <citation type="journal article" date="2011" name="J. Bacteriol.">
        <title>Comparative genomics of 28 Salmonella enterica isolates: evidence for CRISPR-mediated adaptive sublineage evolution.</title>
        <authorList>
            <person name="Fricke W.F."/>
            <person name="Mammel M.K."/>
            <person name="McDermott P.F."/>
            <person name="Tartera C."/>
            <person name="White D.G."/>
            <person name="Leclerc J.E."/>
            <person name="Ravel J."/>
            <person name="Cebula T.A."/>
        </authorList>
    </citation>
    <scope>NUCLEOTIDE SEQUENCE [LARGE SCALE GENOMIC DNA]</scope>
    <source>
        <strain>SL254</strain>
    </source>
</reference>
<dbReference type="EMBL" id="CP001113">
    <property type="protein sequence ID" value="ACF63646.1"/>
    <property type="molecule type" value="Genomic_DNA"/>
</dbReference>
<dbReference type="RefSeq" id="WP_000013290.1">
    <property type="nucleotide sequence ID" value="NZ_CCMR01000001.1"/>
</dbReference>
<dbReference type="SMR" id="B4SZZ4"/>
<dbReference type="KEGG" id="see:SNSL254_A4332"/>
<dbReference type="HOGENOM" id="CLU_000445_88_5_6"/>
<dbReference type="Proteomes" id="UP000008824">
    <property type="component" value="Chromosome"/>
</dbReference>
<dbReference type="GO" id="GO:0005737">
    <property type="term" value="C:cytoplasm"/>
    <property type="evidence" value="ECO:0007669"/>
    <property type="project" value="UniProtKB-SubCell"/>
</dbReference>
<dbReference type="GO" id="GO:0003700">
    <property type="term" value="F:DNA-binding transcription factor activity"/>
    <property type="evidence" value="ECO:0007669"/>
    <property type="project" value="UniProtKB-UniRule"/>
</dbReference>
<dbReference type="GO" id="GO:0043565">
    <property type="term" value="F:sequence-specific DNA binding"/>
    <property type="evidence" value="ECO:0007669"/>
    <property type="project" value="InterPro"/>
</dbReference>
<dbReference type="GO" id="GO:0045893">
    <property type="term" value="P:positive regulation of DNA-templated transcription"/>
    <property type="evidence" value="ECO:0007669"/>
    <property type="project" value="UniProtKB-UniRule"/>
</dbReference>
<dbReference type="GO" id="GO:0019299">
    <property type="term" value="P:rhamnose metabolic process"/>
    <property type="evidence" value="ECO:0007669"/>
    <property type="project" value="UniProtKB-UniRule"/>
</dbReference>
<dbReference type="CDD" id="cd06977">
    <property type="entry name" value="cupin_RhaR_RhaS-like_N"/>
    <property type="match status" value="1"/>
</dbReference>
<dbReference type="Gene3D" id="1.10.10.60">
    <property type="entry name" value="Homeodomain-like"/>
    <property type="match status" value="2"/>
</dbReference>
<dbReference type="Gene3D" id="2.60.120.10">
    <property type="entry name" value="Jelly Rolls"/>
    <property type="match status" value="1"/>
</dbReference>
<dbReference type="HAMAP" id="MF_01533">
    <property type="entry name" value="HTH_type_RhaR"/>
    <property type="match status" value="1"/>
</dbReference>
<dbReference type="InterPro" id="IPR003313">
    <property type="entry name" value="AraC-bd"/>
</dbReference>
<dbReference type="InterPro" id="IPR009057">
    <property type="entry name" value="Homeodomain-like_sf"/>
</dbReference>
<dbReference type="InterPro" id="IPR018060">
    <property type="entry name" value="HTH_AraC"/>
</dbReference>
<dbReference type="InterPro" id="IPR018062">
    <property type="entry name" value="HTH_AraC-typ_CS"/>
</dbReference>
<dbReference type="InterPro" id="IPR047220">
    <property type="entry name" value="RhaR_RhaS-like_N"/>
</dbReference>
<dbReference type="InterPro" id="IPR014710">
    <property type="entry name" value="RmlC-like_jellyroll"/>
</dbReference>
<dbReference type="InterPro" id="IPR011051">
    <property type="entry name" value="RmlC_Cupin_sf"/>
</dbReference>
<dbReference type="InterPro" id="IPR023699">
    <property type="entry name" value="Tscrpt_act_RhaR"/>
</dbReference>
<dbReference type="InterPro" id="IPR020449">
    <property type="entry name" value="Tscrpt_reg_AraC-type_HTH"/>
</dbReference>
<dbReference type="NCBIfam" id="NF010025">
    <property type="entry name" value="PRK13500.1"/>
    <property type="match status" value="1"/>
</dbReference>
<dbReference type="NCBIfam" id="NF010026">
    <property type="entry name" value="PRK13501.1"/>
    <property type="match status" value="1"/>
</dbReference>
<dbReference type="NCBIfam" id="NF010027">
    <property type="entry name" value="PRK13502.1"/>
    <property type="match status" value="1"/>
</dbReference>
<dbReference type="PANTHER" id="PTHR43280">
    <property type="entry name" value="ARAC-FAMILY TRANSCRIPTIONAL REGULATOR"/>
    <property type="match status" value="1"/>
</dbReference>
<dbReference type="PANTHER" id="PTHR43280:SF13">
    <property type="entry name" value="HTH-TYPE TRANSCRIPTIONAL ACTIVATOR RHAR"/>
    <property type="match status" value="1"/>
</dbReference>
<dbReference type="Pfam" id="PF02311">
    <property type="entry name" value="AraC_binding"/>
    <property type="match status" value="1"/>
</dbReference>
<dbReference type="Pfam" id="PF12833">
    <property type="entry name" value="HTH_18"/>
    <property type="match status" value="1"/>
</dbReference>
<dbReference type="PRINTS" id="PR00032">
    <property type="entry name" value="HTHARAC"/>
</dbReference>
<dbReference type="SMART" id="SM00342">
    <property type="entry name" value="HTH_ARAC"/>
    <property type="match status" value="1"/>
</dbReference>
<dbReference type="SUPFAM" id="SSF46689">
    <property type="entry name" value="Homeodomain-like"/>
    <property type="match status" value="1"/>
</dbReference>
<dbReference type="SUPFAM" id="SSF51182">
    <property type="entry name" value="RmlC-like cupins"/>
    <property type="match status" value="1"/>
</dbReference>
<dbReference type="PROSITE" id="PS00041">
    <property type="entry name" value="HTH_ARAC_FAMILY_1"/>
    <property type="match status" value="1"/>
</dbReference>
<dbReference type="PROSITE" id="PS01124">
    <property type="entry name" value="HTH_ARAC_FAMILY_2"/>
    <property type="match status" value="1"/>
</dbReference>
<sequence>MANQLILLKKDFFTDEQQAVTVADRYPQDVFAEHTHEFCELVMVWRGNGLHVLNERPYRITRGDLFYIRAEDKHSYTSVNDLVLQNIIYCPERLKLNVNWQAMIPGFQGAQWHPHWRLGSMGMNQARQVINQLEHESNGRDPLANEMAELLFGQLVMTLKRHRYATDDLPATSRETLLDKLITALANSLECPFALDAFCQQEQCSERVLRQQFRAQTGMTINQYLRQVRICHAQYLLQHSPLMISEISMQCGFEDSNYFSVVFTRETGMTPSQWRHLSNQSD</sequence>
<accession>B4SZZ4</accession>
<proteinExistence type="inferred from homology"/>
<keyword id="KW-0010">Activator</keyword>
<keyword id="KW-0963">Cytoplasm</keyword>
<keyword id="KW-0238">DNA-binding</keyword>
<keyword id="KW-0677">Repeat</keyword>
<keyword id="KW-0684">Rhamnose metabolism</keyword>
<keyword id="KW-0804">Transcription</keyword>
<keyword id="KW-0805">Transcription regulation</keyword>
<comment type="function">
    <text evidence="1">Activates expression of the rhaSR operon in response to L-rhamnose.</text>
</comment>
<comment type="subunit">
    <text evidence="1">Binds DNA as a dimer.</text>
</comment>
<comment type="subcellular location">
    <subcellularLocation>
        <location evidence="1">Cytoplasm</location>
    </subcellularLocation>
</comment>
<name>RHAR_SALNS</name>
<gene>
    <name evidence="1" type="primary">rhaR</name>
    <name type="ordered locus">SNSL254_A4332</name>
</gene>
<organism>
    <name type="scientific">Salmonella newport (strain SL254)</name>
    <dbReference type="NCBI Taxonomy" id="423368"/>
    <lineage>
        <taxon>Bacteria</taxon>
        <taxon>Pseudomonadati</taxon>
        <taxon>Pseudomonadota</taxon>
        <taxon>Gammaproteobacteria</taxon>
        <taxon>Enterobacterales</taxon>
        <taxon>Enterobacteriaceae</taxon>
        <taxon>Salmonella</taxon>
    </lineage>
</organism>